<proteinExistence type="inferred from homology"/>
<protein>
    <recommendedName>
        <fullName evidence="1">Protein X</fullName>
    </recommendedName>
    <alternativeName>
        <fullName evidence="1">HBx</fullName>
    </alternativeName>
    <alternativeName>
        <fullName evidence="1">Peptide X</fullName>
    </alternativeName>
    <alternativeName>
        <fullName evidence="1">pX</fullName>
    </alternativeName>
</protein>
<name>X_HBVA7</name>
<organismHost>
    <name type="scientific">Homo sapiens</name>
    <name type="common">Human</name>
    <dbReference type="NCBI Taxonomy" id="9606"/>
</organismHost>
<organismHost>
    <name type="scientific">Pan troglodytes</name>
    <name type="common">Chimpanzee</name>
    <dbReference type="NCBI Taxonomy" id="9598"/>
</organismHost>
<comment type="function">
    <text evidence="1">Multifunctional protein that plays a role in silencing host antiviral defenses and promoting viral transcription. Does not seem to be essential for HBV infection. May be directly involved in development of cirrhosis and liver cancer (hepatocellular carcinoma). Most of cytosolic activities involve modulation of cytosolic calcium. The effect on apoptosis is controversial depending on the cell types in which the studies have been conducted. May induce apoptosis by localizing in mitochondria and causing loss of mitochondrial membrane potential. May also modulate apoptosis by binding host CFLAR, a key regulator of the death-inducing signaling complex (DISC). Promotes viral transcription by using the host E3 ubiquitin ligase DDB1 to target the SMC5-SMC6 complex to proteasomal degradation. This host complex would otherwise bind to viral episomal DNA, and prevents its transcription. Moderately stimulates transcription of many different viral and cellular transcription elements. Promoters and enhancers stimulated by HBx contain DNA binding sites for NF-kappa-B, AP-1, AP-2, c-EBP, ATF/CREB, or the calcium-activated factor NF-AT.</text>
</comment>
<comment type="subunit">
    <text evidence="1">May form homodimer. May interact with host CEBPA, CFLAR, CREB1, DDB1, E4F1, HBXIP, HSPD1/HSP60, NFKBIA, POLR2E and SMAD4. Interacts with host SMC5-SMC6 complex and induces its degradation. Interacts with host TRPC4AP; leading to prevent ubiquitination of TRPC4AP. Interacts with host PLSCR1; this interaction promotes ubiquitination and degradation of HBx and impairs HBx-mediated cell proliferation.</text>
</comment>
<comment type="subcellular location">
    <subcellularLocation>
        <location evidence="1">Host cytoplasm</location>
    </subcellularLocation>
    <subcellularLocation>
        <location evidence="1">Host nucleus</location>
    </subcellularLocation>
    <subcellularLocation>
        <location evidence="1">Host mitochondrion</location>
    </subcellularLocation>
    <text evidence="1">Mainly cytoplasmic as only a fraction is detected in the nucleus. In cytoplasm, a minor fraction associates with mitochondria or proteasomes.</text>
</comment>
<comment type="PTM">
    <text evidence="1">A fraction may be phosphorylated in insect cells and HepG2 cells, a human hepatoblastoma cell line. Phosphorylated in vitro by host protein kinase C or mitogen-activated protein kinase. N-acetylated in insect cells.</text>
</comment>
<comment type="similarity">
    <text evidence="1">Belongs to the orthohepadnavirus protein X family.</text>
</comment>
<comment type="caution">
    <text>Transcriptional activities should be taken with a grain of salt. As of 2007, all studies demonstrating in vivo interaction between protein X and transcriptional components were performed with significant overexpression of both proteins and in the absence of viral infection.</text>
</comment>
<gene>
    <name evidence="1" type="primary">X</name>
</gene>
<dbReference type="EMBL" id="AB014370">
    <property type="protein sequence ID" value="BAA32869.1"/>
    <property type="molecule type" value="Genomic_DNA"/>
</dbReference>
<dbReference type="PIR" id="S12542">
    <property type="entry name" value="S12542"/>
</dbReference>
<dbReference type="PIR" id="S33687">
    <property type="entry name" value="S33687"/>
</dbReference>
<dbReference type="SMR" id="O91531"/>
<dbReference type="Proteomes" id="UP000007910">
    <property type="component" value="Genome"/>
</dbReference>
<dbReference type="GO" id="GO:0033650">
    <property type="term" value="C:host cell mitochondrion"/>
    <property type="evidence" value="ECO:0007669"/>
    <property type="project" value="UniProtKB-SubCell"/>
</dbReference>
<dbReference type="GO" id="GO:0042025">
    <property type="term" value="C:host cell nucleus"/>
    <property type="evidence" value="ECO:0007669"/>
    <property type="project" value="UniProtKB-SubCell"/>
</dbReference>
<dbReference type="GO" id="GO:0006351">
    <property type="term" value="P:DNA-templated transcription"/>
    <property type="evidence" value="ECO:0007669"/>
    <property type="project" value="UniProtKB-UniRule"/>
</dbReference>
<dbReference type="GO" id="GO:0085033">
    <property type="term" value="P:symbiont-mediated activation of host NF-kappaB cascade"/>
    <property type="evidence" value="ECO:0007669"/>
    <property type="project" value="UniProtKB-UniRule"/>
</dbReference>
<dbReference type="GO" id="GO:0039592">
    <property type="term" value="P:symbiont-mediated arrest of host cell cycle during G2/M transition"/>
    <property type="evidence" value="ECO:0007669"/>
    <property type="project" value="UniProtKB-UniRule"/>
</dbReference>
<dbReference type="GO" id="GO:0019079">
    <property type="term" value="P:viral genome replication"/>
    <property type="evidence" value="ECO:0007669"/>
    <property type="project" value="UniProtKB-UniRule"/>
</dbReference>
<dbReference type="HAMAP" id="MF_04074">
    <property type="entry name" value="HBV_X"/>
    <property type="match status" value="1"/>
</dbReference>
<dbReference type="InterPro" id="IPR000236">
    <property type="entry name" value="Transactivation_prot_X"/>
</dbReference>
<dbReference type="Pfam" id="PF00739">
    <property type="entry name" value="X"/>
    <property type="match status" value="1"/>
</dbReference>
<reference key="1">
    <citation type="journal article" date="1993" name="Nucleic Acids Res.">
        <title>Complete nucleotide sequence of a hepatitis B virus, subtype adw2, and identification of three types of C open reading frame.</title>
        <authorList>
            <person name="Preisler-Adams S."/>
            <person name="Schlayer H.J."/>
            <person name="Peters T."/>
            <person name="Korp R."/>
            <person name="Rasenack J."/>
        </authorList>
    </citation>
    <scope>NUCLEOTIDE SEQUENCE [GENOMIC DNA]</scope>
</reference>
<reference key="2">
    <citation type="journal article" date="2004" name="J. Virol.">
        <title>The enigmatic X gene of hepatitis B virus.</title>
        <authorList>
            <person name="Bouchard M.J."/>
            <person name="Schneider R.J."/>
        </authorList>
    </citation>
    <scope>REVIEW</scope>
</reference>
<reference key="3">
    <citation type="journal article" date="2006" name="Cancer Sci.">
        <title>Molecular functions and biological roles of hepatitis B virus x protein.</title>
        <authorList>
            <person name="Tang H."/>
            <person name="Oishi N."/>
            <person name="Kaneko S."/>
            <person name="Murakami S."/>
        </authorList>
    </citation>
    <scope>REVIEW</scope>
</reference>
<sequence length="154" mass="16514">MAARLCCQLDPSRDVLCLRPVGAESRGRPLSGPLGTLSSPSPSAVPADHGAHLSLRGLPVCAFSSAGPCALRFTSARCMETTVNAHQSLPKVLHKRTLGLPAMSTTDLEAYFKDCVFKDWEELGEEIRLMIFVLGGCRHKLVCAPAPCNFFTSA</sequence>
<evidence type="ECO:0000255" key="1">
    <source>
        <dbReference type="HAMAP-Rule" id="MF_04074"/>
    </source>
</evidence>
<organism>
    <name type="scientific">Hepatitis B virus genotype A2 (isolate Japan/11D11HCCW/1998)</name>
    <name type="common">HBV-A</name>
    <dbReference type="NCBI Taxonomy" id="489457"/>
    <lineage>
        <taxon>Viruses</taxon>
        <taxon>Riboviria</taxon>
        <taxon>Pararnavirae</taxon>
        <taxon>Artverviricota</taxon>
        <taxon>Revtraviricetes</taxon>
        <taxon>Blubervirales</taxon>
        <taxon>Hepadnaviridae</taxon>
        <taxon>Orthohepadnavirus</taxon>
        <taxon>Hepatitis B virus</taxon>
    </lineage>
</organism>
<keyword id="KW-1074">Activation of host NF-kappa-B by virus</keyword>
<keyword id="KW-0010">Activator</keyword>
<keyword id="KW-0053">Apoptosis</keyword>
<keyword id="KW-1035">Host cytoplasm</keyword>
<keyword id="KW-1079">Host G2/M cell cycle arrest by virus</keyword>
<keyword id="KW-1045">Host mitochondrion</keyword>
<keyword id="KW-1048">Host nucleus</keyword>
<keyword id="KW-0945">Host-virus interaction</keyword>
<keyword id="KW-1121">Modulation of host cell cycle by virus</keyword>
<keyword id="KW-0804">Transcription</keyword>
<keyword id="KW-0805">Transcription regulation</keyword>
<accession>O91531</accession>
<feature type="chain" id="PRO_0000319896" description="Protein X">
    <location>
        <begin position="1"/>
        <end position="154"/>
    </location>
</feature>
<feature type="region of interest" description="Mitochondrial targeting sequence" evidence="1">
    <location>
        <begin position="68"/>
        <end position="117"/>
    </location>
</feature>